<organism>
    <name type="scientific">Mus musculus</name>
    <name type="common">Mouse</name>
    <dbReference type="NCBI Taxonomy" id="10090"/>
    <lineage>
        <taxon>Eukaryota</taxon>
        <taxon>Metazoa</taxon>
        <taxon>Chordata</taxon>
        <taxon>Craniata</taxon>
        <taxon>Vertebrata</taxon>
        <taxon>Euteleostomi</taxon>
        <taxon>Mammalia</taxon>
        <taxon>Eutheria</taxon>
        <taxon>Euarchontoglires</taxon>
        <taxon>Glires</taxon>
        <taxon>Rodentia</taxon>
        <taxon>Myomorpha</taxon>
        <taxon>Muroidea</taxon>
        <taxon>Muridae</taxon>
        <taxon>Murinae</taxon>
        <taxon>Mus</taxon>
        <taxon>Mus</taxon>
    </lineage>
</organism>
<evidence type="ECO:0000255" key="1">
    <source>
        <dbReference type="HAMAP-Rule" id="MF_03204"/>
    </source>
</evidence>
<evidence type="ECO:0000256" key="2">
    <source>
        <dbReference type="SAM" id="MobiDB-lite"/>
    </source>
</evidence>
<evidence type="ECO:0000269" key="3">
    <source>
    </source>
</evidence>
<evidence type="ECO:0000269" key="4">
    <source>
    </source>
</evidence>
<evidence type="ECO:0000269" key="5">
    <source>
    </source>
</evidence>
<evidence type="ECO:0000269" key="6">
    <source>
    </source>
</evidence>
<evidence type="ECO:0000269" key="7">
    <source>
    </source>
</evidence>
<evidence type="ECO:0000269" key="8">
    <source>
    </source>
</evidence>
<evidence type="ECO:0000269" key="9">
    <source>
    </source>
</evidence>
<evidence type="ECO:0000305" key="10"/>
<evidence type="ECO:0000305" key="11">
    <source>
    </source>
</evidence>
<evidence type="ECO:0000305" key="12">
    <source>
    </source>
</evidence>
<evidence type="ECO:0000305" key="13">
    <source>
    </source>
</evidence>
<name>ELOV4_MOUSE</name>
<comment type="function">
    <text evidence="1 4 5 6 7 8 9">Catalyzes the first and rate-limiting reaction of the four reactions that constitute the long-chain fatty acids elongation cycle. This endoplasmic reticulum-bound enzymatic process allows the addition of 2 carbons to the chain of long- and very long-chain fatty acids (VLCFAs) per cycle. Condensing enzyme that catalyzes the synthesis of very long chain saturated (VLC-SFA) and polyunsaturated (PUFA) fatty acids that are involved in multiple biological processes as precursors of membrane lipids and lipid mediators. May play a critical role in early brain and skin development.</text>
</comment>
<comment type="catalytic activity">
    <reaction evidence="1 4 5 6 7 8 9">
        <text>a very-long-chain acyl-CoA + malonyl-CoA + H(+) = a very-long-chain 3-oxoacyl-CoA + CO2 + CoA</text>
        <dbReference type="Rhea" id="RHEA:32727"/>
        <dbReference type="ChEBI" id="CHEBI:15378"/>
        <dbReference type="ChEBI" id="CHEBI:16526"/>
        <dbReference type="ChEBI" id="CHEBI:57287"/>
        <dbReference type="ChEBI" id="CHEBI:57384"/>
        <dbReference type="ChEBI" id="CHEBI:90725"/>
        <dbReference type="ChEBI" id="CHEBI:90736"/>
        <dbReference type="EC" id="2.3.1.199"/>
    </reaction>
    <physiologicalReaction direction="left-to-right" evidence="4">
        <dbReference type="Rhea" id="RHEA:32728"/>
    </physiologicalReaction>
</comment>
<comment type="catalytic activity">
    <reaction evidence="4 9">
        <text>hexacosanoyl-CoA + malonyl-CoA + H(+) = 3-oxooctacosanyol-CoA + CO2 + CoA</text>
        <dbReference type="Rhea" id="RHEA:36519"/>
        <dbReference type="ChEBI" id="CHEBI:15378"/>
        <dbReference type="ChEBI" id="CHEBI:16526"/>
        <dbReference type="ChEBI" id="CHEBI:57287"/>
        <dbReference type="ChEBI" id="CHEBI:57384"/>
        <dbReference type="ChEBI" id="CHEBI:64868"/>
        <dbReference type="ChEBI" id="CHEBI:73976"/>
    </reaction>
    <physiologicalReaction direction="left-to-right" evidence="9">
        <dbReference type="Rhea" id="RHEA:36520"/>
    </physiologicalReaction>
</comment>
<comment type="catalytic activity">
    <reaction evidence="9">
        <text>octacosanoyl-CoA + malonyl-CoA + H(+) = 3-oxo-triacontanoyl-CoA + CO2 + CoA</text>
        <dbReference type="Rhea" id="RHEA:36807"/>
        <dbReference type="ChEBI" id="CHEBI:15378"/>
        <dbReference type="ChEBI" id="CHEBI:16526"/>
        <dbReference type="ChEBI" id="CHEBI:57287"/>
        <dbReference type="ChEBI" id="CHEBI:57384"/>
        <dbReference type="ChEBI" id="CHEBI:74141"/>
        <dbReference type="ChEBI" id="CHEBI:74228"/>
    </reaction>
    <physiologicalReaction direction="left-to-right" evidence="9">
        <dbReference type="Rhea" id="RHEA:36808"/>
    </physiologicalReaction>
</comment>
<comment type="catalytic activity">
    <reaction evidence="9">
        <text>triacontanoyl-CoA + malonyl-CoA + H(+) = 3-oxo-dotriacontanoyl-CoA + CO2 + CoA</text>
        <dbReference type="Rhea" id="RHEA:43852"/>
        <dbReference type="ChEBI" id="CHEBI:15378"/>
        <dbReference type="ChEBI" id="CHEBI:16526"/>
        <dbReference type="ChEBI" id="CHEBI:57287"/>
        <dbReference type="ChEBI" id="CHEBI:57384"/>
        <dbReference type="ChEBI" id="CHEBI:76386"/>
        <dbReference type="ChEBI" id="CHEBI:83795"/>
    </reaction>
    <physiologicalReaction direction="left-to-right" evidence="9">
        <dbReference type="Rhea" id="RHEA:43853"/>
    </physiologicalReaction>
</comment>
<comment type="catalytic activity">
    <reaction evidence="8">
        <text>(19Z,22Z,25Z,28Z,31Z)-tetratriacontapentaenoyl-CoA + malonyl-CoA + H(+) = 3-oxo-(21Z,24Z,27Z,30Z,33Z)-hexatriacontapentaenoyl-CoA + CO2 + CoA</text>
        <dbReference type="Rhea" id="RHEA:36871"/>
        <dbReference type="ChEBI" id="CHEBI:15378"/>
        <dbReference type="ChEBI" id="CHEBI:16526"/>
        <dbReference type="ChEBI" id="CHEBI:57287"/>
        <dbReference type="ChEBI" id="CHEBI:57384"/>
        <dbReference type="ChEBI" id="CHEBI:74260"/>
        <dbReference type="ChEBI" id="CHEBI:74261"/>
    </reaction>
    <physiologicalReaction direction="left-to-right" evidence="8">
        <dbReference type="Rhea" id="RHEA:36872"/>
    </physiologicalReaction>
</comment>
<comment type="catalytic activity">
    <reaction evidence="5">
        <text>(4Z,7Z,10Z,13Z,16Z,19Z)-docosahexaenoyl-CoA + malonyl-CoA + H(+) = 3-oxo-(6Z,9Z,12Z,15Z,18Z,21Z)-tetracosahexaenoyl-CoA + CO2 + CoA</text>
        <dbReference type="Rhea" id="RHEA:36943"/>
        <dbReference type="ChEBI" id="CHEBI:15378"/>
        <dbReference type="ChEBI" id="CHEBI:16526"/>
        <dbReference type="ChEBI" id="CHEBI:57287"/>
        <dbReference type="ChEBI" id="CHEBI:57384"/>
        <dbReference type="ChEBI" id="CHEBI:74298"/>
        <dbReference type="ChEBI" id="CHEBI:74304"/>
    </reaction>
    <physiologicalReaction direction="left-to-right" evidence="5">
        <dbReference type="Rhea" id="RHEA:36944"/>
    </physiologicalReaction>
</comment>
<comment type="catalytic activity">
    <reaction evidence="5">
        <text>(7Z,10Z,13Z,16Z)-docosatetraenoyl-CoA + malonyl-CoA + H(+) = (9Z,12Z,15Z,18Z)-3-oxotetracosatetraenoyl-CoA + CO2 + CoA</text>
        <dbReference type="Rhea" id="RHEA:36479"/>
        <dbReference type="ChEBI" id="CHEBI:15378"/>
        <dbReference type="ChEBI" id="CHEBI:16526"/>
        <dbReference type="ChEBI" id="CHEBI:57287"/>
        <dbReference type="ChEBI" id="CHEBI:57384"/>
        <dbReference type="ChEBI" id="CHEBI:73856"/>
        <dbReference type="ChEBI" id="CHEBI:73857"/>
    </reaction>
    <physiologicalReaction direction="left-to-right" evidence="5">
        <dbReference type="Rhea" id="RHEA:36480"/>
    </physiologicalReaction>
</comment>
<comment type="catalytic activity">
    <reaction evidence="11">
        <text>(11Z,14Z,17Z,20Z,23Z)-hexacosapentaenoyl-CoA + malonyl-CoA + H(+) = 3-oxo-(13Z,16Z,19Z,22Z,25Z)-octacosapentaenoyl-CoA + CO2 + CoA</text>
        <dbReference type="Rhea" id="RHEA:36819"/>
        <dbReference type="ChEBI" id="CHEBI:15378"/>
        <dbReference type="ChEBI" id="CHEBI:16526"/>
        <dbReference type="ChEBI" id="CHEBI:57287"/>
        <dbReference type="ChEBI" id="CHEBI:57384"/>
        <dbReference type="ChEBI" id="CHEBI:74229"/>
        <dbReference type="ChEBI" id="CHEBI:74230"/>
    </reaction>
    <physiologicalReaction direction="left-to-right" evidence="11">
        <dbReference type="Rhea" id="RHEA:36820"/>
    </physiologicalReaction>
</comment>
<comment type="catalytic activity">
    <reaction evidence="11">
        <text>(13Z,16Z,19Z,22Z,25Z)-octacosapentaenoyl-CoA + malonyl-CoA + H(+) = 3-oxo-(15Z,18Z,21Z,24Z,27Z)-triacontapentaenoyl-CoA + CO2 + CoA</text>
        <dbReference type="Rhea" id="RHEA:36843"/>
        <dbReference type="ChEBI" id="CHEBI:15378"/>
        <dbReference type="ChEBI" id="CHEBI:16526"/>
        <dbReference type="ChEBI" id="CHEBI:57287"/>
        <dbReference type="ChEBI" id="CHEBI:57384"/>
        <dbReference type="ChEBI" id="CHEBI:74233"/>
        <dbReference type="ChEBI" id="CHEBI:74246"/>
    </reaction>
    <physiologicalReaction direction="left-to-right" evidence="11">
        <dbReference type="Rhea" id="RHEA:36844"/>
    </physiologicalReaction>
</comment>
<comment type="catalytic activity">
    <reaction evidence="11">
        <text>(15Z,18Z,21Z,24Z,27Z)-triacontapentaenoyl-CoA + malonyl-CoA + H(+) = 3-oxo-(17Z,20Z,23Z,26Z,29Z)-dotriacontapentaenoyl-CoA + CO2 + CoA</text>
        <dbReference type="Rhea" id="RHEA:36851"/>
        <dbReference type="ChEBI" id="CHEBI:15378"/>
        <dbReference type="ChEBI" id="CHEBI:16526"/>
        <dbReference type="ChEBI" id="CHEBI:57287"/>
        <dbReference type="ChEBI" id="CHEBI:57384"/>
        <dbReference type="ChEBI" id="CHEBI:74247"/>
        <dbReference type="ChEBI" id="CHEBI:74254"/>
    </reaction>
    <physiologicalReaction direction="left-to-right" evidence="11">
        <dbReference type="Rhea" id="RHEA:36852"/>
    </physiologicalReaction>
</comment>
<comment type="catalytic activity">
    <reaction evidence="11">
        <text>(17Z,20Z,23Z,26Z,29Z)-dotriacontapentaenoyl-CoA + malonyl-CoA + H(+) = 3-oxo-(19Z,22Z,25Z,28Z,31Z)-tetratriacontapentaenoyl-CoA + CO2 + CoA</text>
        <dbReference type="Rhea" id="RHEA:36859"/>
        <dbReference type="ChEBI" id="CHEBI:15378"/>
        <dbReference type="ChEBI" id="CHEBI:16526"/>
        <dbReference type="ChEBI" id="CHEBI:57287"/>
        <dbReference type="ChEBI" id="CHEBI:57384"/>
        <dbReference type="ChEBI" id="CHEBI:74249"/>
        <dbReference type="ChEBI" id="CHEBI:74259"/>
    </reaction>
    <physiologicalReaction direction="left-to-right" evidence="11">
        <dbReference type="Rhea" id="RHEA:36860"/>
    </physiologicalReaction>
</comment>
<comment type="catalytic activity">
    <reaction evidence="11">
        <text>(21Z,24Z,27Z,30Z,33Z)-hexatriacontapentaenoyl-CoA + malonyl-CoA + H(+) = 3-oxo-(23Z,26Z,29Z,32Z,35Z)-octatriacontapentaenoyl-CoA + CO2 + CoA</text>
        <dbReference type="Rhea" id="RHEA:36875"/>
        <dbReference type="ChEBI" id="CHEBI:15378"/>
        <dbReference type="ChEBI" id="CHEBI:16526"/>
        <dbReference type="ChEBI" id="CHEBI:57287"/>
        <dbReference type="ChEBI" id="CHEBI:57384"/>
        <dbReference type="ChEBI" id="CHEBI:74262"/>
        <dbReference type="ChEBI" id="CHEBI:74263"/>
    </reaction>
    <physiologicalReaction direction="left-to-right" evidence="11">
        <dbReference type="Rhea" id="RHEA:36876"/>
    </physiologicalReaction>
</comment>
<comment type="catalytic activity">
    <reaction evidence="12">
        <text>(11Z,14Z,17Z,20Z)-hexacosatetraenoyl-CoA + malonyl-CoA + H(+) = (13Z,16Z,19Z,22Z)-3-oxooctacosatetraenoyl-CoA + CO2 + CoA</text>
        <dbReference type="Rhea" id="RHEA:36907"/>
        <dbReference type="ChEBI" id="CHEBI:15378"/>
        <dbReference type="ChEBI" id="CHEBI:16526"/>
        <dbReference type="ChEBI" id="CHEBI:57287"/>
        <dbReference type="ChEBI" id="CHEBI:57384"/>
        <dbReference type="ChEBI" id="CHEBI:74282"/>
        <dbReference type="ChEBI" id="CHEBI:74283"/>
    </reaction>
    <physiologicalReaction direction="left-to-right" evidence="12">
        <dbReference type="Rhea" id="RHEA:36908"/>
    </physiologicalReaction>
</comment>
<comment type="catalytic activity">
    <reaction evidence="12">
        <text>(13Z,16Z,19Z,22Z)-octacosatetraenoyl-CoA + malonyl-CoA + H(+) = 3-oxo-(15Z,18Z,21Z,24Z)-triacontatetraenoyl-CoA + CO2 + CoA</text>
        <dbReference type="Rhea" id="RHEA:36911"/>
        <dbReference type="ChEBI" id="CHEBI:15378"/>
        <dbReference type="ChEBI" id="CHEBI:16526"/>
        <dbReference type="ChEBI" id="CHEBI:57287"/>
        <dbReference type="ChEBI" id="CHEBI:57384"/>
        <dbReference type="ChEBI" id="CHEBI:74285"/>
        <dbReference type="ChEBI" id="CHEBI:74286"/>
    </reaction>
    <physiologicalReaction direction="left-to-right" evidence="12">
        <dbReference type="Rhea" id="RHEA:36912"/>
    </physiologicalReaction>
</comment>
<comment type="catalytic activity">
    <reaction evidence="12">
        <text>(15Z,18Z,21Z,24Z)-triacontatetraenoyl-CoA + malonyl-CoA + H(+) = 3-oxo-(17Z,20Z,23Z,26Z)-dotriacontatetraenoyl-CoA + CO2 + CoA</text>
        <dbReference type="Rhea" id="RHEA:36915"/>
        <dbReference type="ChEBI" id="CHEBI:15378"/>
        <dbReference type="ChEBI" id="CHEBI:16526"/>
        <dbReference type="ChEBI" id="CHEBI:57287"/>
        <dbReference type="ChEBI" id="CHEBI:57384"/>
        <dbReference type="ChEBI" id="CHEBI:74287"/>
        <dbReference type="ChEBI" id="CHEBI:74288"/>
    </reaction>
    <physiologicalReaction direction="left-to-right" evidence="12">
        <dbReference type="Rhea" id="RHEA:36916"/>
    </physiologicalReaction>
</comment>
<comment type="catalytic activity">
    <reaction evidence="12">
        <text>(17Z,20Z,23Z,26Z)-dotriacontatetraenoyl-CoA + malonyl-CoA + H(+) = 3-oxo-(19Z,22Z,25Z,28Z)-tetratriacontatetraenoyl-CoA + CO2 + CoA</text>
        <dbReference type="Rhea" id="RHEA:36919"/>
        <dbReference type="ChEBI" id="CHEBI:15378"/>
        <dbReference type="ChEBI" id="CHEBI:16526"/>
        <dbReference type="ChEBI" id="CHEBI:57287"/>
        <dbReference type="ChEBI" id="CHEBI:57384"/>
        <dbReference type="ChEBI" id="CHEBI:74289"/>
        <dbReference type="ChEBI" id="CHEBI:74290"/>
    </reaction>
    <physiologicalReaction direction="left-to-right" evidence="12">
        <dbReference type="Rhea" id="RHEA:36920"/>
    </physiologicalReaction>
</comment>
<comment type="catalytic activity">
    <reaction evidence="12">
        <text>(19Z,22Z,25Z,28Z)-tetratriacontatetraenoyl-CoA + malonyl-CoA + H(+) = 3-oxo-(21Z,24Z,27Z,30Z)-hexatriacontatetraenoyl-CoA + CO2 + CoA</text>
        <dbReference type="Rhea" id="RHEA:36923"/>
        <dbReference type="ChEBI" id="CHEBI:15378"/>
        <dbReference type="ChEBI" id="CHEBI:16526"/>
        <dbReference type="ChEBI" id="CHEBI:57287"/>
        <dbReference type="ChEBI" id="CHEBI:57384"/>
        <dbReference type="ChEBI" id="CHEBI:74291"/>
        <dbReference type="ChEBI" id="CHEBI:74292"/>
    </reaction>
    <physiologicalReaction direction="left-to-right" evidence="12">
        <dbReference type="Rhea" id="RHEA:36924"/>
    </physiologicalReaction>
</comment>
<comment type="catalytic activity">
    <reaction evidence="12">
        <text>(21Z,24Z,27Z,30Z)-hexatriacontatetraenoyl-CoA + malonyl-CoA + H(+) = 3-oxo-(23Z,26Z,29Z,32Z)-octatriacontatetraenoyl-CoA + CO2 + CoA</text>
        <dbReference type="Rhea" id="RHEA:36927"/>
        <dbReference type="ChEBI" id="CHEBI:15378"/>
        <dbReference type="ChEBI" id="CHEBI:16526"/>
        <dbReference type="ChEBI" id="CHEBI:57287"/>
        <dbReference type="ChEBI" id="CHEBI:57384"/>
        <dbReference type="ChEBI" id="CHEBI:74293"/>
        <dbReference type="ChEBI" id="CHEBI:74294"/>
    </reaction>
    <physiologicalReaction direction="left-to-right" evidence="12">
        <dbReference type="Rhea" id="RHEA:36928"/>
    </physiologicalReaction>
</comment>
<comment type="catalytic activity">
    <reaction evidence="12">
        <text>(6Z,9Z,12Z,15Z,18Z,21Z)-tetracosahexaenoyl-CoA + malonyl-CoA + H(+) = 3-oxo-(8Z,11Z,14Z,17Z,20Z,23Z)-hexacosahexaenoyl-CoA + CO2 + CoA</text>
        <dbReference type="Rhea" id="RHEA:36947"/>
        <dbReference type="ChEBI" id="CHEBI:15378"/>
        <dbReference type="ChEBI" id="CHEBI:16526"/>
        <dbReference type="ChEBI" id="CHEBI:57287"/>
        <dbReference type="ChEBI" id="CHEBI:57384"/>
        <dbReference type="ChEBI" id="CHEBI:74086"/>
        <dbReference type="ChEBI" id="CHEBI:74305"/>
    </reaction>
    <physiologicalReaction direction="left-to-right" evidence="12">
        <dbReference type="Rhea" id="RHEA:36948"/>
    </physiologicalReaction>
</comment>
<comment type="catalytic activity">
    <reaction evidence="13">
        <text>(8Z,11Z,14Z,17Z,20Z,23Z)-hexacosahexaenoyl-CoA + malonyl-CoA + H(+) = 3-oxo-(10Z,13Z,16Z,19Z,22Z,25Z)-octacosahexaenoyl-CoA + CO2 + CoA</text>
        <dbReference type="Rhea" id="RHEA:36963"/>
        <dbReference type="ChEBI" id="CHEBI:15378"/>
        <dbReference type="ChEBI" id="CHEBI:16526"/>
        <dbReference type="ChEBI" id="CHEBI:57287"/>
        <dbReference type="ChEBI" id="CHEBI:57384"/>
        <dbReference type="ChEBI" id="CHEBI:74306"/>
        <dbReference type="ChEBI" id="CHEBI:74311"/>
    </reaction>
    <physiologicalReaction direction="left-to-right" evidence="13">
        <dbReference type="Rhea" id="RHEA:36964"/>
    </physiologicalReaction>
</comment>
<comment type="catalytic activity">
    <reaction evidence="13">
        <text>(10Z,13Z,16Z,19Z,22Z,25Z)-octacosahexaenoyl-CoA + malonyl-CoA + H(+) = 3-oxo-(12Z,15Z,18Z,21Z,24Z,27Z)-triacontahexaenoyl-CoA + CO2 + CoA</text>
        <dbReference type="Rhea" id="RHEA:36967"/>
        <dbReference type="ChEBI" id="CHEBI:15378"/>
        <dbReference type="ChEBI" id="CHEBI:16526"/>
        <dbReference type="ChEBI" id="CHEBI:57287"/>
        <dbReference type="ChEBI" id="CHEBI:57384"/>
        <dbReference type="ChEBI" id="CHEBI:74312"/>
        <dbReference type="ChEBI" id="CHEBI:74313"/>
    </reaction>
    <physiologicalReaction direction="left-to-right" evidence="13">
        <dbReference type="Rhea" id="RHEA:36968"/>
    </physiologicalReaction>
</comment>
<comment type="catalytic activity">
    <reaction evidence="12">
        <text>(12Z,15Z,18Z,21Z,24Z,27Z)-triacontahexaenoyl-CoA + malonyl-CoA + H(+) = 3-oxo-(14Z,17Z,20Z,23Z,26Z,29Z)-dotriacontahexaenoyl-CoA + CO2 + CoA</text>
        <dbReference type="Rhea" id="RHEA:36979"/>
        <dbReference type="ChEBI" id="CHEBI:15378"/>
        <dbReference type="ChEBI" id="CHEBI:16526"/>
        <dbReference type="ChEBI" id="CHEBI:57287"/>
        <dbReference type="ChEBI" id="CHEBI:57384"/>
        <dbReference type="ChEBI" id="CHEBI:74315"/>
        <dbReference type="ChEBI" id="CHEBI:74316"/>
    </reaction>
    <physiologicalReaction direction="left-to-right" evidence="12">
        <dbReference type="Rhea" id="RHEA:36980"/>
    </physiologicalReaction>
</comment>
<comment type="catalytic activity">
    <reaction evidence="12">
        <text>(14Z,17Z,20Z,23Z,26Z,29Z)-dotriacontahexaenoyl-CoA + malonyl-CoA + H(+) = 3-oxo-(16Z,19Z,22Z,25Z,28Z,31Z)-tetratriacontahexaenoyl-CoA + CO2 + CoA</text>
        <dbReference type="Rhea" id="RHEA:36983"/>
        <dbReference type="ChEBI" id="CHEBI:15378"/>
        <dbReference type="ChEBI" id="CHEBI:16526"/>
        <dbReference type="ChEBI" id="CHEBI:57287"/>
        <dbReference type="ChEBI" id="CHEBI:57384"/>
        <dbReference type="ChEBI" id="CHEBI:74317"/>
        <dbReference type="ChEBI" id="CHEBI:74318"/>
    </reaction>
    <physiologicalReaction direction="left-to-right" evidence="12">
        <dbReference type="Rhea" id="RHEA:36984"/>
    </physiologicalReaction>
</comment>
<comment type="catalytic activity">
    <reaction evidence="12">
        <text>(16Z,19Z,22Z,25Z,28Z,31Z)-tetratriacontahexaenoyl-CoA + malonyl-CoA + H(+) = 3-oxo-(18Z,21Z,24Z,27Z,30Z,33Z)-hexatriacontahexaenoyl-CoA + CO2 + CoA</text>
        <dbReference type="Rhea" id="RHEA:36995"/>
        <dbReference type="ChEBI" id="CHEBI:15378"/>
        <dbReference type="ChEBI" id="CHEBI:16526"/>
        <dbReference type="ChEBI" id="CHEBI:57287"/>
        <dbReference type="ChEBI" id="CHEBI:57384"/>
        <dbReference type="ChEBI" id="CHEBI:74319"/>
        <dbReference type="ChEBI" id="CHEBI:74320"/>
    </reaction>
    <physiologicalReaction direction="left-to-right" evidence="12">
        <dbReference type="Rhea" id="RHEA:36996"/>
    </physiologicalReaction>
</comment>
<comment type="catalytic activity">
    <reaction evidence="13">
        <text>(9Z,12Z,15Z,18Z,21Z)-tetracosapentaenoyl-CoA + malonyl-CoA + H(+) = 3-oxo-(11Z,14Z,17Z,20Z,23Z)-hexacosapentaenoyl-CoA + CO2 + CoA</text>
        <dbReference type="Rhea" id="RHEA:37243"/>
        <dbReference type="ChEBI" id="CHEBI:15378"/>
        <dbReference type="ChEBI" id="CHEBI:16526"/>
        <dbReference type="ChEBI" id="CHEBI:57287"/>
        <dbReference type="ChEBI" id="CHEBI:57384"/>
        <dbReference type="ChEBI" id="CHEBI:74083"/>
        <dbReference type="ChEBI" id="CHEBI:74663"/>
    </reaction>
    <physiologicalReaction direction="left-to-right" evidence="13">
        <dbReference type="Rhea" id="RHEA:37244"/>
    </physiologicalReaction>
</comment>
<comment type="pathway">
    <text evidence="1 4 5 6 7 8 9">Lipid metabolism; fatty acid biosynthesis.</text>
</comment>
<comment type="subunit">
    <text evidence="1">Oligomer.</text>
</comment>
<comment type="subcellular location">
    <subcellularLocation>
        <location evidence="1 8 9">Endoplasmic reticulum membrane</location>
        <topology evidence="1">Multi-pass membrane protein</topology>
    </subcellularLocation>
</comment>
<comment type="tissue specificity">
    <text evidence="3">Expressed in the retina, exclusively in photoreceptor cells and in the brain, skin, testis and lens.</text>
</comment>
<comment type="developmental stage">
    <text evidence="3">Expressed in the ocular tissues of the retina at 10.5 dpc and becomes restricted predominantly to the photoreceptor layer in the mature retina (at protein level). Expressed in the embryo at 7 dpc.</text>
</comment>
<comment type="domain">
    <text evidence="1 9">The C-terminal di-lysine motif confers endoplasmic reticulum localization.</text>
</comment>
<comment type="PTM">
    <text evidence="8 9">N-glycosylated.</text>
</comment>
<comment type="disruption phenotype">
    <text evidence="7">Rod or cone-specific conditional knockout of Elovl4 results in a decrease in very long chain (C30-C34) polyunsaturated fatty acids in the retina, but has no effect on photoreceptors survival, phototransduction, synaptic transmission or visual behavior.</text>
</comment>
<comment type="similarity">
    <text evidence="1">Belongs to the ELO family. ELOVL4 subfamily.</text>
</comment>
<feature type="chain" id="PRO_0000207545" description="Very long chain fatty acid elongase 4">
    <location>
        <begin position="1"/>
        <end position="312"/>
    </location>
</feature>
<feature type="transmembrane region" description="Helical" evidence="1">
    <location>
        <begin position="42"/>
        <end position="62"/>
    </location>
</feature>
<feature type="transmembrane region" description="Helical" evidence="1">
    <location>
        <begin position="78"/>
        <end position="98"/>
    </location>
</feature>
<feature type="transmembrane region" description="Helical" evidence="1">
    <location>
        <begin position="127"/>
        <end position="147"/>
    </location>
</feature>
<feature type="transmembrane region" description="Helical" evidence="1">
    <location>
        <begin position="165"/>
        <end position="185"/>
    </location>
</feature>
<feature type="transmembrane region" description="Helical" evidence="1">
    <location>
        <begin position="188"/>
        <end position="208"/>
    </location>
</feature>
<feature type="transmembrane region" description="Helical" evidence="1">
    <location>
        <begin position="217"/>
        <end position="237"/>
    </location>
</feature>
<feature type="transmembrane region" description="Helical" evidence="1">
    <location>
        <begin position="246"/>
        <end position="266"/>
    </location>
</feature>
<feature type="region of interest" description="Disordered" evidence="2">
    <location>
        <begin position="273"/>
        <end position="312"/>
    </location>
</feature>
<feature type="short sequence motif" description="Di-lysine motif" evidence="1 9">
    <location>
        <begin position="308"/>
        <end position="312"/>
    </location>
</feature>
<feature type="compositionally biased region" description="Polar residues" evidence="2">
    <location>
        <begin position="273"/>
        <end position="292"/>
    </location>
</feature>
<feature type="glycosylation site" description="N-linked (GlcNAc...) asparagine" evidence="1">
    <location>
        <position position="20"/>
    </location>
</feature>
<feature type="glycosylation site" description="N-linked (GlcNAc...) asparagine" evidence="1">
    <location>
        <position position="292"/>
    </location>
</feature>
<feature type="mutagenesis site" description="Loss of N-glycosylation. No effect on fatty acid elongase activity." evidence="9">
    <original>T</original>
    <variation>A</variation>
    <location>
        <position position="22"/>
    </location>
</feature>
<feature type="mutagenesis site" description="Loss of fatty acid elongase activity." evidence="9">
    <original>H</original>
    <variation>Q</variation>
    <location>
        <position position="158"/>
    </location>
</feature>
<feature type="mutagenesis site" description="Loss of fatty acid elongase activity." evidence="9">
    <original>H</original>
    <variation>Q</variation>
    <location>
        <position position="161"/>
    </location>
</feature>
<feature type="mutagenesis site" description="Loss of fatty acid elongase activity." evidence="9">
    <original>H</original>
    <variation>Q</variation>
    <location>
        <position position="162"/>
    </location>
</feature>
<feature type="mutagenesis site" description="Loss of localization to the endoplasmic reticulum. Loss of fatty acid elongase activity." evidence="9">
    <original>KPK</original>
    <variation>RKR</variation>
    <location>
        <begin position="308"/>
        <end position="310"/>
    </location>
</feature>
<feature type="sequence conflict" description="In Ref. 1; AAG47667." evidence="10" ref="1">
    <original>G</original>
    <variation>A</variation>
    <location>
        <position position="126"/>
    </location>
</feature>
<protein>
    <recommendedName>
        <fullName evidence="1">Very long chain fatty acid elongase 4</fullName>
        <ecNumber evidence="1 4 5 6 7 8 9">2.3.1.199</ecNumber>
    </recommendedName>
    <alternativeName>
        <fullName evidence="1">3-keto acyl-CoA synthase Elovl4</fullName>
    </alternativeName>
    <alternativeName>
        <fullName evidence="1">ELOVL fatty acid elongase 4</fullName>
        <shortName evidence="1">ELOVL FA elongase 4</shortName>
    </alternativeName>
    <alternativeName>
        <fullName evidence="1">Elongation of very long chain fatty acids protein 4</fullName>
    </alternativeName>
    <alternativeName>
        <fullName evidence="1">Very long chain 3-ketoacyl-CoA synthase 4</fullName>
    </alternativeName>
    <alternativeName>
        <fullName evidence="1">Very long chain 3-oxoacyl-CoA synthase 4</fullName>
    </alternativeName>
</protein>
<accession>Q9EQC4</accession>
<accession>Q8JZV3</accession>
<reference key="1">
    <citation type="journal article" date="2001" name="Nat. Genet.">
        <title>A 5-bp deletion in ELOVL4 is associated with two related forms of autosomal dominant macular dystrophy.</title>
        <authorList>
            <person name="Zhang K."/>
            <person name="Kniazeva M."/>
            <person name="Han M."/>
            <person name="Li W."/>
            <person name="Yu Z."/>
            <person name="Yang Z."/>
            <person name="Li Y."/>
            <person name="Metzker M.L."/>
            <person name="Allikmets R."/>
            <person name="Zack D.J."/>
            <person name="Kakuk L.E."/>
            <person name="Lagali P.S."/>
            <person name="Wong P.W."/>
            <person name="McDonald I.M."/>
            <person name="Sieving P.A."/>
            <person name="Figueroa D.J."/>
            <person name="Austin C.P."/>
            <person name="Gould R.J."/>
            <person name="Ayyagari R."/>
            <person name="Petrukhin K."/>
        </authorList>
    </citation>
    <scope>NUCLEOTIDE SEQUENCE [MRNA]</scope>
    <source>
        <strain>C57BL/6J</strain>
        <tissue>Testis</tissue>
    </source>
</reference>
<reference key="2">
    <citation type="journal article" date="2004" name="Genomics">
        <title>Characterization of mouse orthologue of ELOVL4: genomic organization and spatial and temporal expression.</title>
        <authorList>
            <person name="Mandal M.N."/>
            <person name="Ambasudhan R."/>
            <person name="Wong P.W."/>
            <person name="Gage P.J."/>
            <person name="Sieving P.A."/>
            <person name="Ayyagari R."/>
        </authorList>
    </citation>
    <scope>NUCLEOTIDE SEQUENCE [GENOMIC DNA]</scope>
    <scope>TISSUE SPECIFICITY</scope>
    <scope>DEVELOPMENTAL STAGE</scope>
    <source>
        <strain>C57BL/6J</strain>
        <tissue>Brain</tissue>
    </source>
</reference>
<reference key="3">
    <citation type="journal article" date="2005" name="Science">
        <title>The transcriptional landscape of the mammalian genome.</title>
        <authorList>
            <person name="Carninci P."/>
            <person name="Kasukawa T."/>
            <person name="Katayama S."/>
            <person name="Gough J."/>
            <person name="Frith M.C."/>
            <person name="Maeda N."/>
            <person name="Oyama R."/>
            <person name="Ravasi T."/>
            <person name="Lenhard B."/>
            <person name="Wells C."/>
            <person name="Kodzius R."/>
            <person name="Shimokawa K."/>
            <person name="Bajic V.B."/>
            <person name="Brenner S.E."/>
            <person name="Batalov S."/>
            <person name="Forrest A.R."/>
            <person name="Zavolan M."/>
            <person name="Davis M.J."/>
            <person name="Wilming L.G."/>
            <person name="Aidinis V."/>
            <person name="Allen J.E."/>
            <person name="Ambesi-Impiombato A."/>
            <person name="Apweiler R."/>
            <person name="Aturaliya R.N."/>
            <person name="Bailey T.L."/>
            <person name="Bansal M."/>
            <person name="Baxter L."/>
            <person name="Beisel K.W."/>
            <person name="Bersano T."/>
            <person name="Bono H."/>
            <person name="Chalk A.M."/>
            <person name="Chiu K.P."/>
            <person name="Choudhary V."/>
            <person name="Christoffels A."/>
            <person name="Clutterbuck D.R."/>
            <person name="Crowe M.L."/>
            <person name="Dalla E."/>
            <person name="Dalrymple B.P."/>
            <person name="de Bono B."/>
            <person name="Della Gatta G."/>
            <person name="di Bernardo D."/>
            <person name="Down T."/>
            <person name="Engstrom P."/>
            <person name="Fagiolini M."/>
            <person name="Faulkner G."/>
            <person name="Fletcher C.F."/>
            <person name="Fukushima T."/>
            <person name="Furuno M."/>
            <person name="Futaki S."/>
            <person name="Gariboldi M."/>
            <person name="Georgii-Hemming P."/>
            <person name="Gingeras T.R."/>
            <person name="Gojobori T."/>
            <person name="Green R.E."/>
            <person name="Gustincich S."/>
            <person name="Harbers M."/>
            <person name="Hayashi Y."/>
            <person name="Hensch T.K."/>
            <person name="Hirokawa N."/>
            <person name="Hill D."/>
            <person name="Huminiecki L."/>
            <person name="Iacono M."/>
            <person name="Ikeo K."/>
            <person name="Iwama A."/>
            <person name="Ishikawa T."/>
            <person name="Jakt M."/>
            <person name="Kanapin A."/>
            <person name="Katoh M."/>
            <person name="Kawasawa Y."/>
            <person name="Kelso J."/>
            <person name="Kitamura H."/>
            <person name="Kitano H."/>
            <person name="Kollias G."/>
            <person name="Krishnan S.P."/>
            <person name="Kruger A."/>
            <person name="Kummerfeld S.K."/>
            <person name="Kurochkin I.V."/>
            <person name="Lareau L.F."/>
            <person name="Lazarevic D."/>
            <person name="Lipovich L."/>
            <person name="Liu J."/>
            <person name="Liuni S."/>
            <person name="McWilliam S."/>
            <person name="Madan Babu M."/>
            <person name="Madera M."/>
            <person name="Marchionni L."/>
            <person name="Matsuda H."/>
            <person name="Matsuzawa S."/>
            <person name="Miki H."/>
            <person name="Mignone F."/>
            <person name="Miyake S."/>
            <person name="Morris K."/>
            <person name="Mottagui-Tabar S."/>
            <person name="Mulder N."/>
            <person name="Nakano N."/>
            <person name="Nakauchi H."/>
            <person name="Ng P."/>
            <person name="Nilsson R."/>
            <person name="Nishiguchi S."/>
            <person name="Nishikawa S."/>
            <person name="Nori F."/>
            <person name="Ohara O."/>
            <person name="Okazaki Y."/>
            <person name="Orlando V."/>
            <person name="Pang K.C."/>
            <person name="Pavan W.J."/>
            <person name="Pavesi G."/>
            <person name="Pesole G."/>
            <person name="Petrovsky N."/>
            <person name="Piazza S."/>
            <person name="Reed J."/>
            <person name="Reid J.F."/>
            <person name="Ring B.Z."/>
            <person name="Ringwald M."/>
            <person name="Rost B."/>
            <person name="Ruan Y."/>
            <person name="Salzberg S.L."/>
            <person name="Sandelin A."/>
            <person name="Schneider C."/>
            <person name="Schoenbach C."/>
            <person name="Sekiguchi K."/>
            <person name="Semple C.A."/>
            <person name="Seno S."/>
            <person name="Sessa L."/>
            <person name="Sheng Y."/>
            <person name="Shibata Y."/>
            <person name="Shimada H."/>
            <person name="Shimada K."/>
            <person name="Silva D."/>
            <person name="Sinclair B."/>
            <person name="Sperling S."/>
            <person name="Stupka E."/>
            <person name="Sugiura K."/>
            <person name="Sultana R."/>
            <person name="Takenaka Y."/>
            <person name="Taki K."/>
            <person name="Tammoja K."/>
            <person name="Tan S.L."/>
            <person name="Tang S."/>
            <person name="Taylor M.S."/>
            <person name="Tegner J."/>
            <person name="Teichmann S.A."/>
            <person name="Ueda H.R."/>
            <person name="van Nimwegen E."/>
            <person name="Verardo R."/>
            <person name="Wei C.L."/>
            <person name="Yagi K."/>
            <person name="Yamanishi H."/>
            <person name="Zabarovsky E."/>
            <person name="Zhu S."/>
            <person name="Zimmer A."/>
            <person name="Hide W."/>
            <person name="Bult C."/>
            <person name="Grimmond S.M."/>
            <person name="Teasdale R.D."/>
            <person name="Liu E.T."/>
            <person name="Brusic V."/>
            <person name="Quackenbush J."/>
            <person name="Wahlestedt C."/>
            <person name="Mattick J.S."/>
            <person name="Hume D.A."/>
            <person name="Kai C."/>
            <person name="Sasaki D."/>
            <person name="Tomaru Y."/>
            <person name="Fukuda S."/>
            <person name="Kanamori-Katayama M."/>
            <person name="Suzuki M."/>
            <person name="Aoki J."/>
            <person name="Arakawa T."/>
            <person name="Iida J."/>
            <person name="Imamura K."/>
            <person name="Itoh M."/>
            <person name="Kato T."/>
            <person name="Kawaji H."/>
            <person name="Kawagashira N."/>
            <person name="Kawashima T."/>
            <person name="Kojima M."/>
            <person name="Kondo S."/>
            <person name="Konno H."/>
            <person name="Nakano K."/>
            <person name="Ninomiya N."/>
            <person name="Nishio T."/>
            <person name="Okada M."/>
            <person name="Plessy C."/>
            <person name="Shibata K."/>
            <person name="Shiraki T."/>
            <person name="Suzuki S."/>
            <person name="Tagami M."/>
            <person name="Waki K."/>
            <person name="Watahiki A."/>
            <person name="Okamura-Oho Y."/>
            <person name="Suzuki H."/>
            <person name="Kawai J."/>
            <person name="Hayashizaki Y."/>
        </authorList>
    </citation>
    <scope>NUCLEOTIDE SEQUENCE [LARGE SCALE MRNA]</scope>
    <source>
        <strain>C57BL/6J</strain>
        <tissue>Skin</tissue>
    </source>
</reference>
<reference key="4">
    <citation type="submission" date="2005-07" db="EMBL/GenBank/DDBJ databases">
        <authorList>
            <person name="Mural R.J."/>
            <person name="Adams M.D."/>
            <person name="Myers E.W."/>
            <person name="Smith H.O."/>
            <person name="Venter J.C."/>
        </authorList>
    </citation>
    <scope>NUCLEOTIDE SEQUENCE [LARGE SCALE GENOMIC DNA]</scope>
</reference>
<reference key="5">
    <citation type="journal article" date="2004" name="Genome Res.">
        <title>The status, quality, and expansion of the NIH full-length cDNA project: the Mammalian Gene Collection (MGC).</title>
        <authorList>
            <consortium name="The MGC Project Team"/>
        </authorList>
    </citation>
    <scope>NUCLEOTIDE SEQUENCE [LARGE SCALE MRNA]</scope>
    <source>
        <tissue>Eye</tissue>
    </source>
</reference>
<reference key="6">
    <citation type="journal article" date="2008" name="Proc. Natl. Acad. Sci. U.S.A.">
        <title>Role of Stargardt-3 macular dystrophy protein (ELOVL4) in the biosynthesis of very long chain fatty acids.</title>
        <authorList>
            <person name="Agbaga M.P."/>
            <person name="Brush R.S."/>
            <person name="Mandal M.N."/>
            <person name="Henry K."/>
            <person name="Elliott M.H."/>
            <person name="Anderson R.E."/>
        </authorList>
    </citation>
    <scope>FUNCTION</scope>
    <scope>CATALYTIC ACTIVITY</scope>
    <scope>PATHWAY</scope>
</reference>
<reference key="7">
    <citation type="journal article" date="2012" name="J. Biol. Chem.">
        <title>Essential role of ELOVL4 protein in very long chain fatty acid synthesis and retinal function.</title>
        <authorList>
            <person name="Harkewicz R."/>
            <person name="Du H."/>
            <person name="Tong Z."/>
            <person name="Alkuraya H."/>
            <person name="Bedell M."/>
            <person name="Sun W."/>
            <person name="Wang X."/>
            <person name="Hsu Y.H."/>
            <person name="Esteve-Rudd J."/>
            <person name="Hughes G."/>
            <person name="Su Z."/>
            <person name="Zhang M."/>
            <person name="Lopes V.S."/>
            <person name="Molday R.S."/>
            <person name="Williams D.S."/>
            <person name="Dennis E.A."/>
            <person name="Zhang K."/>
        </authorList>
    </citation>
    <scope>FUNCTION</scope>
    <scope>CATALYTIC ACTIVITY</scope>
    <scope>PATHWAY</scope>
</reference>
<reference key="8">
    <citation type="journal article" date="2012" name="J. Lipid Res.">
        <title>ELOVL4 protein preferentially elongates 20:5n3 to very long chain PUFAs over 20:4n6 and 22:6n3.</title>
        <authorList>
            <person name="Yu M."/>
            <person name="Benham A."/>
            <person name="Logan S."/>
            <person name="Brush R.S."/>
            <person name="Mandal M.N."/>
            <person name="Anderson R.E."/>
            <person name="Agbaga M.P."/>
        </authorList>
    </citation>
    <scope>FUNCTION</scope>
    <scope>CATALYTIC ACTIVITY</scope>
    <scope>PATHWAY</scope>
</reference>
<reference key="9">
    <citation type="journal article" date="2013" name="Proc. Natl. Acad. Sci. U.S.A.">
        <title>Role of ELOVL4 and very long-chain polyunsaturated fatty acids in mouse models of Stargardt type 3 retinal degeneration.</title>
        <authorList>
            <person name="Barabas P."/>
            <person name="Liu A."/>
            <person name="Xing W."/>
            <person name="Chen C.K."/>
            <person name="Tong Z."/>
            <person name="Watt C.B."/>
            <person name="Jones B.W."/>
            <person name="Bernstein P.S."/>
            <person name="Krizaj D."/>
        </authorList>
    </citation>
    <scope>FUNCTION</scope>
    <scope>CATALYTIC ACTIVITY</scope>
    <scope>PATHWAY</scope>
    <scope>DISRUPTION PHENOTYPE</scope>
</reference>
<reference key="10">
    <citation type="journal article" date="2013" name="Proc. Natl. Acad. Sci. U.S.A.">
        <title>Deciphering mutant ELOVL4 activity in autosomal-dominant Stargardt macular dystrophy.</title>
        <authorList>
            <person name="Logan S."/>
            <person name="Agbaga M.P."/>
            <person name="Chan M.D."/>
            <person name="Kabir N."/>
            <person name="Mandal N.A."/>
            <person name="Brush R.S."/>
            <person name="Anderson R.E."/>
        </authorList>
    </citation>
    <scope>FUNCTION</scope>
    <scope>CATALYTIC ACTIVITY</scope>
    <scope>PATHWAY</scope>
    <scope>SUBCELLULAR LOCATION</scope>
    <scope>GLYCOSYLATION</scope>
</reference>
<reference key="11">
    <citation type="journal article" date="2014" name="J. Lipid Res.">
        <title>Endoplasmic reticulum microenvironment and conserved histidines govern ELOVL4 fatty acid elongase activity.</title>
        <authorList>
            <person name="Logan S."/>
            <person name="Agbaga M.P."/>
            <person name="Chan M.D."/>
            <person name="Brush R.S."/>
            <person name="Anderson R.E."/>
        </authorList>
    </citation>
    <scope>FUNCTION</scope>
    <scope>CATALYTIC ACTIVITY</scope>
    <scope>PATHWAY</scope>
    <scope>MUTAGENESIS OF THR-22; HIS-158; HIS-161; HIS-162 AND 308-LYS--LYS-310</scope>
    <scope>SUBCELLULAR LOCATION</scope>
    <scope>GLYCOSYLATION</scope>
    <scope>MOTIF</scope>
</reference>
<keyword id="KW-0256">Endoplasmic reticulum</keyword>
<keyword id="KW-0275">Fatty acid biosynthesis</keyword>
<keyword id="KW-0276">Fatty acid metabolism</keyword>
<keyword id="KW-0325">Glycoprotein</keyword>
<keyword id="KW-0444">Lipid biosynthesis</keyword>
<keyword id="KW-0443">Lipid metabolism</keyword>
<keyword id="KW-0472">Membrane</keyword>
<keyword id="KW-1185">Reference proteome</keyword>
<keyword id="KW-0808">Transferase</keyword>
<keyword id="KW-0812">Transmembrane</keyword>
<keyword id="KW-1133">Transmembrane helix</keyword>
<proteinExistence type="evidence at protein level"/>
<dbReference type="EC" id="2.3.1.199" evidence="1 4 5 6 7 8 9"/>
<dbReference type="EMBL" id="AF277093">
    <property type="protein sequence ID" value="AAG47667.1"/>
    <property type="molecule type" value="mRNA"/>
</dbReference>
<dbReference type="EMBL" id="AJ550628">
    <property type="protein sequence ID" value="CAD80158.4"/>
    <property type="molecule type" value="Genomic_DNA"/>
</dbReference>
<dbReference type="EMBL" id="AJ550629">
    <property type="protein sequence ID" value="CAD80158.4"/>
    <property type="status" value="JOINED"/>
    <property type="molecule type" value="Genomic_DNA"/>
</dbReference>
<dbReference type="EMBL" id="AJ550630">
    <property type="protein sequence ID" value="CAD80158.4"/>
    <property type="status" value="JOINED"/>
    <property type="molecule type" value="Genomic_DNA"/>
</dbReference>
<dbReference type="EMBL" id="AJ550631">
    <property type="protein sequence ID" value="CAD80158.4"/>
    <property type="status" value="JOINED"/>
    <property type="molecule type" value="Genomic_DNA"/>
</dbReference>
<dbReference type="EMBL" id="AJ550632">
    <property type="protein sequence ID" value="CAD80158.4"/>
    <property type="status" value="JOINED"/>
    <property type="molecule type" value="Genomic_DNA"/>
</dbReference>
<dbReference type="EMBL" id="AJ550633">
    <property type="protein sequence ID" value="CAD80158.4"/>
    <property type="status" value="JOINED"/>
    <property type="molecule type" value="Genomic_DNA"/>
</dbReference>
<dbReference type="EMBL" id="AK029065">
    <property type="protein sequence ID" value="BAC26274.1"/>
    <property type="molecule type" value="mRNA"/>
</dbReference>
<dbReference type="EMBL" id="CH466522">
    <property type="protein sequence ID" value="EDL26470.1"/>
    <property type="molecule type" value="Genomic_DNA"/>
</dbReference>
<dbReference type="EMBL" id="BC037030">
    <property type="protein sequence ID" value="AAH37030.1"/>
    <property type="molecule type" value="mRNA"/>
</dbReference>
<dbReference type="CCDS" id="CCDS23376.1"/>
<dbReference type="RefSeq" id="NP_683743.2">
    <property type="nucleotide sequence ID" value="NM_148941.2"/>
</dbReference>
<dbReference type="SMR" id="Q9EQC4"/>
<dbReference type="FunCoup" id="Q9EQC4">
    <property type="interactions" value="1000"/>
</dbReference>
<dbReference type="STRING" id="10090.ENSMUSP00000034796"/>
<dbReference type="SwissLipids" id="SLP:000000264"/>
<dbReference type="GlyConnect" id="2280">
    <property type="glycosylation" value="1 N-Linked glycan (1 site)"/>
</dbReference>
<dbReference type="GlyCosmos" id="Q9EQC4">
    <property type="glycosylation" value="2 sites, 1 glycan"/>
</dbReference>
<dbReference type="GlyGen" id="Q9EQC4">
    <property type="glycosylation" value="2 sites, 1 N-linked glycan (1 site)"/>
</dbReference>
<dbReference type="iPTMnet" id="Q9EQC4"/>
<dbReference type="PhosphoSitePlus" id="Q9EQC4"/>
<dbReference type="PaxDb" id="10090-ENSMUSP00000034796"/>
<dbReference type="ProteomicsDB" id="275454"/>
<dbReference type="Antibodypedia" id="31608">
    <property type="antibodies" value="268 antibodies from 27 providers"/>
</dbReference>
<dbReference type="Ensembl" id="ENSMUST00000034796.14">
    <property type="protein sequence ID" value="ENSMUSP00000034796.7"/>
    <property type="gene ID" value="ENSMUSG00000032262.14"/>
</dbReference>
<dbReference type="GeneID" id="83603"/>
<dbReference type="KEGG" id="mmu:83603"/>
<dbReference type="UCSC" id="uc012gxk.1">
    <property type="organism name" value="mouse"/>
</dbReference>
<dbReference type="AGR" id="MGI:1933331"/>
<dbReference type="CTD" id="6785"/>
<dbReference type="MGI" id="MGI:1933331">
    <property type="gene designation" value="Elovl4"/>
</dbReference>
<dbReference type="VEuPathDB" id="HostDB:ENSMUSG00000032262"/>
<dbReference type="eggNOG" id="KOG3071">
    <property type="taxonomic scope" value="Eukaryota"/>
</dbReference>
<dbReference type="GeneTree" id="ENSGT01050000244838"/>
<dbReference type="HOGENOM" id="CLU_048483_0_1_1"/>
<dbReference type="InParanoid" id="Q9EQC4"/>
<dbReference type="OMA" id="WTYFTST"/>
<dbReference type="OrthoDB" id="434092at2759"/>
<dbReference type="PhylomeDB" id="Q9EQC4"/>
<dbReference type="TreeFam" id="TF323454"/>
<dbReference type="UniPathway" id="UPA00094"/>
<dbReference type="BioGRID-ORCS" id="83603">
    <property type="hits" value="3 hits in 77 CRISPR screens"/>
</dbReference>
<dbReference type="ChiTaRS" id="Elovl4">
    <property type="organism name" value="mouse"/>
</dbReference>
<dbReference type="PRO" id="PR:Q9EQC4"/>
<dbReference type="Proteomes" id="UP000000589">
    <property type="component" value="Chromosome 9"/>
</dbReference>
<dbReference type="RNAct" id="Q9EQC4">
    <property type="molecule type" value="protein"/>
</dbReference>
<dbReference type="Bgee" id="ENSMUSG00000032262">
    <property type="expression patterns" value="Expressed in skin of external ear and 194 other cell types or tissues"/>
</dbReference>
<dbReference type="ExpressionAtlas" id="Q9EQC4">
    <property type="expression patterns" value="baseline and differential"/>
</dbReference>
<dbReference type="GO" id="GO:0005783">
    <property type="term" value="C:endoplasmic reticulum"/>
    <property type="evidence" value="ECO:0000250"/>
    <property type="project" value="UniProtKB"/>
</dbReference>
<dbReference type="GO" id="GO:0005789">
    <property type="term" value="C:endoplasmic reticulum membrane"/>
    <property type="evidence" value="ECO:0000250"/>
    <property type="project" value="UniProtKB"/>
</dbReference>
<dbReference type="GO" id="GO:0009922">
    <property type="term" value="F:fatty acid elongase activity"/>
    <property type="evidence" value="ECO:0000315"/>
    <property type="project" value="UniProtKB"/>
</dbReference>
<dbReference type="GO" id="GO:0034626">
    <property type="term" value="P:fatty acid elongation, polyunsaturated fatty acid"/>
    <property type="evidence" value="ECO:0000315"/>
    <property type="project" value="UniProtKB"/>
</dbReference>
<dbReference type="GO" id="GO:0019367">
    <property type="term" value="P:fatty acid elongation, saturated fatty acid"/>
    <property type="evidence" value="ECO:0000250"/>
    <property type="project" value="UniProtKB"/>
</dbReference>
<dbReference type="GO" id="GO:0035338">
    <property type="term" value="P:long-chain fatty-acyl-CoA biosynthetic process"/>
    <property type="evidence" value="ECO:0007669"/>
    <property type="project" value="UniProtKB-UniRule"/>
</dbReference>
<dbReference type="GO" id="GO:0006636">
    <property type="term" value="P:unsaturated fatty acid biosynthetic process"/>
    <property type="evidence" value="ECO:0007669"/>
    <property type="project" value="UniProtKB-UniRule"/>
</dbReference>
<dbReference type="GO" id="GO:0042761">
    <property type="term" value="P:very long-chain fatty acid biosynthetic process"/>
    <property type="evidence" value="ECO:0000250"/>
    <property type="project" value="UniProtKB"/>
</dbReference>
<dbReference type="HAMAP" id="MF_03204">
    <property type="entry name" value="VLCF_elongase_4"/>
    <property type="match status" value="1"/>
</dbReference>
<dbReference type="InterPro" id="IPR030457">
    <property type="entry name" value="ELO_CS"/>
</dbReference>
<dbReference type="InterPro" id="IPR002076">
    <property type="entry name" value="ELO_fam"/>
</dbReference>
<dbReference type="InterPro" id="IPR033678">
    <property type="entry name" value="ELOVL4"/>
</dbReference>
<dbReference type="PANTHER" id="PTHR11157:SF12">
    <property type="entry name" value="ELONGATION OF VERY LONG CHAIN FATTY ACIDS PROTEIN 4"/>
    <property type="match status" value="1"/>
</dbReference>
<dbReference type="PANTHER" id="PTHR11157">
    <property type="entry name" value="FATTY ACID ACYL TRANSFERASE-RELATED"/>
    <property type="match status" value="1"/>
</dbReference>
<dbReference type="Pfam" id="PF01151">
    <property type="entry name" value="ELO"/>
    <property type="match status" value="1"/>
</dbReference>
<dbReference type="PROSITE" id="PS01188">
    <property type="entry name" value="ELO"/>
    <property type="match status" value="1"/>
</dbReference>
<sequence length="312" mass="36506">MGLLDSEPGSVLNAMSTAFNDTVEFYRWTWTIADKRVADWPLMQSPWPTISISTLYLLFVWLGPKWMKDREPFQMRLVLIIYNFGMVLLNLFIFRELFMGSYNAGYSYICQSVDYSNDVNEVRIAGALWWYFVSKGVEYLDTVFFILRKKNNQVSFLHVYHHCTMFTLWWIGIKWVAGGQAFFGAQMNSFIHVIMYSYYGLTAFGPWIQKYLWWKRYLTMLQLVQFHVTIGHTALSLYTDCPFPKWMHWALIAYAISFIFLFLNFYTRTYNEPKQSKTGKTATNGISSNGVNKSEKALENGKPQKNGKPKGE</sequence>
<gene>
    <name evidence="1" type="primary">Elovl4</name>
</gene>